<feature type="chain" id="PRO_0000237122" description="Small ribosomal subunit protein uS10">
    <location>
        <begin position="1"/>
        <end position="102"/>
    </location>
</feature>
<gene>
    <name evidence="1" type="primary">rps10</name>
    <name type="ordered locus">Mbar_A3684</name>
</gene>
<protein>
    <recommendedName>
        <fullName evidence="1">Small ribosomal subunit protein uS10</fullName>
    </recommendedName>
    <alternativeName>
        <fullName evidence="2">30S ribosomal protein S10</fullName>
    </alternativeName>
</protein>
<keyword id="KW-0687">Ribonucleoprotein</keyword>
<keyword id="KW-0689">Ribosomal protein</keyword>
<name>RS10_METBF</name>
<sequence>MQKARIRLSGISPKDLDGVCNQVKSIAERTGVNISGPVPLPTKKLVVPTRKSPSGDGTATWDHWEMRVHKRLIDIAADERALRQLMRIQVPKDINIEIVLEG</sequence>
<accession>Q464Z5</accession>
<comment type="function">
    <text evidence="1">Involved in the binding of tRNA to the ribosomes.</text>
</comment>
<comment type="subunit">
    <text evidence="1">Part of the 30S ribosomal subunit.</text>
</comment>
<comment type="similarity">
    <text evidence="1">Belongs to the universal ribosomal protein uS10 family.</text>
</comment>
<evidence type="ECO:0000255" key="1">
    <source>
        <dbReference type="HAMAP-Rule" id="MF_00508"/>
    </source>
</evidence>
<evidence type="ECO:0000305" key="2"/>
<reference key="1">
    <citation type="journal article" date="2006" name="J. Bacteriol.">
        <title>The Methanosarcina barkeri genome: comparative analysis with Methanosarcina acetivorans and Methanosarcina mazei reveals extensive rearrangement within methanosarcinal genomes.</title>
        <authorList>
            <person name="Maeder D.L."/>
            <person name="Anderson I."/>
            <person name="Brettin T.S."/>
            <person name="Bruce D.C."/>
            <person name="Gilna P."/>
            <person name="Han C.S."/>
            <person name="Lapidus A."/>
            <person name="Metcalf W.W."/>
            <person name="Saunders E."/>
            <person name="Tapia R."/>
            <person name="Sowers K.R."/>
        </authorList>
    </citation>
    <scope>NUCLEOTIDE SEQUENCE [LARGE SCALE GENOMIC DNA]</scope>
    <source>
        <strain>Fusaro / DSM 804</strain>
    </source>
</reference>
<proteinExistence type="inferred from homology"/>
<dbReference type="EMBL" id="CP000099">
    <property type="protein sequence ID" value="AAZ72547.1"/>
    <property type="molecule type" value="Genomic_DNA"/>
</dbReference>
<dbReference type="SMR" id="Q464Z5"/>
<dbReference type="STRING" id="269797.Mbar_A3684"/>
<dbReference type="PaxDb" id="269797-Mbar_A3684"/>
<dbReference type="KEGG" id="mba:Mbar_A3684"/>
<dbReference type="eggNOG" id="arCOG01758">
    <property type="taxonomic scope" value="Archaea"/>
</dbReference>
<dbReference type="HOGENOM" id="CLU_122625_0_1_2"/>
<dbReference type="OrthoDB" id="371736at2157"/>
<dbReference type="GO" id="GO:0015935">
    <property type="term" value="C:small ribosomal subunit"/>
    <property type="evidence" value="ECO:0007669"/>
    <property type="project" value="InterPro"/>
</dbReference>
<dbReference type="GO" id="GO:0003735">
    <property type="term" value="F:structural constituent of ribosome"/>
    <property type="evidence" value="ECO:0007669"/>
    <property type="project" value="InterPro"/>
</dbReference>
<dbReference type="GO" id="GO:0000049">
    <property type="term" value="F:tRNA binding"/>
    <property type="evidence" value="ECO:0007669"/>
    <property type="project" value="UniProtKB-UniRule"/>
</dbReference>
<dbReference type="GO" id="GO:0006412">
    <property type="term" value="P:translation"/>
    <property type="evidence" value="ECO:0007669"/>
    <property type="project" value="UniProtKB-UniRule"/>
</dbReference>
<dbReference type="FunFam" id="3.30.70.600:FF:000004">
    <property type="entry name" value="30S ribosomal protein S10"/>
    <property type="match status" value="1"/>
</dbReference>
<dbReference type="Gene3D" id="3.30.70.600">
    <property type="entry name" value="Ribosomal protein S10 domain"/>
    <property type="match status" value="1"/>
</dbReference>
<dbReference type="HAMAP" id="MF_00508">
    <property type="entry name" value="Ribosomal_uS10"/>
    <property type="match status" value="1"/>
</dbReference>
<dbReference type="InterPro" id="IPR001848">
    <property type="entry name" value="Ribosomal_uS10"/>
</dbReference>
<dbReference type="InterPro" id="IPR018268">
    <property type="entry name" value="Ribosomal_uS10_CS"/>
</dbReference>
<dbReference type="InterPro" id="IPR027486">
    <property type="entry name" value="Ribosomal_uS10_dom"/>
</dbReference>
<dbReference type="InterPro" id="IPR036838">
    <property type="entry name" value="Ribosomal_uS10_dom_sf"/>
</dbReference>
<dbReference type="InterPro" id="IPR005729">
    <property type="entry name" value="Ribosomal_uS10_euk/arc"/>
</dbReference>
<dbReference type="NCBIfam" id="TIGR01046">
    <property type="entry name" value="uS10_euk_arch"/>
    <property type="match status" value="1"/>
</dbReference>
<dbReference type="PANTHER" id="PTHR11700">
    <property type="entry name" value="30S RIBOSOMAL PROTEIN S10 FAMILY MEMBER"/>
    <property type="match status" value="1"/>
</dbReference>
<dbReference type="Pfam" id="PF00338">
    <property type="entry name" value="Ribosomal_S10"/>
    <property type="match status" value="1"/>
</dbReference>
<dbReference type="PRINTS" id="PR00971">
    <property type="entry name" value="RIBOSOMALS10"/>
</dbReference>
<dbReference type="SMART" id="SM01403">
    <property type="entry name" value="Ribosomal_S10"/>
    <property type="match status" value="1"/>
</dbReference>
<dbReference type="SUPFAM" id="SSF54999">
    <property type="entry name" value="Ribosomal protein S10"/>
    <property type="match status" value="1"/>
</dbReference>
<dbReference type="PROSITE" id="PS00361">
    <property type="entry name" value="RIBOSOMAL_S10"/>
    <property type="match status" value="1"/>
</dbReference>
<organism>
    <name type="scientific">Methanosarcina barkeri (strain Fusaro / DSM 804)</name>
    <dbReference type="NCBI Taxonomy" id="269797"/>
    <lineage>
        <taxon>Archaea</taxon>
        <taxon>Methanobacteriati</taxon>
        <taxon>Methanobacteriota</taxon>
        <taxon>Stenosarchaea group</taxon>
        <taxon>Methanomicrobia</taxon>
        <taxon>Methanosarcinales</taxon>
        <taxon>Methanosarcinaceae</taxon>
        <taxon>Methanosarcina</taxon>
    </lineage>
</organism>